<proteinExistence type="inferred from homology"/>
<evidence type="ECO:0000250" key="1"/>
<evidence type="ECO:0000305" key="2"/>
<reference key="1">
    <citation type="journal article" date="1995" name="Science">
        <title>Whole-genome random sequencing and assembly of Haemophilus influenzae Rd.</title>
        <authorList>
            <person name="Fleischmann R.D."/>
            <person name="Adams M.D."/>
            <person name="White O."/>
            <person name="Clayton R.A."/>
            <person name="Kirkness E.F."/>
            <person name="Kerlavage A.R."/>
            <person name="Bult C.J."/>
            <person name="Tomb J.-F."/>
            <person name="Dougherty B.A."/>
            <person name="Merrick J.M."/>
            <person name="McKenney K."/>
            <person name="Sutton G.G."/>
            <person name="FitzHugh W."/>
            <person name="Fields C.A."/>
            <person name="Gocayne J.D."/>
            <person name="Scott J.D."/>
            <person name="Shirley R."/>
            <person name="Liu L.-I."/>
            <person name="Glodek A."/>
            <person name="Kelley J.M."/>
            <person name="Weidman J.F."/>
            <person name="Phillips C.A."/>
            <person name="Spriggs T."/>
            <person name="Hedblom E."/>
            <person name="Cotton M.D."/>
            <person name="Utterback T.R."/>
            <person name="Hanna M.C."/>
            <person name="Nguyen D.T."/>
            <person name="Saudek D.M."/>
            <person name="Brandon R.C."/>
            <person name="Fine L.D."/>
            <person name="Fritchman J.L."/>
            <person name="Fuhrmann J.L."/>
            <person name="Geoghagen N.S.M."/>
            <person name="Gnehm C.L."/>
            <person name="McDonald L.A."/>
            <person name="Small K.V."/>
            <person name="Fraser C.M."/>
            <person name="Smith H.O."/>
            <person name="Venter J.C."/>
        </authorList>
    </citation>
    <scope>NUCLEOTIDE SEQUENCE [LARGE SCALE GENOMIC DNA]</scope>
    <source>
        <strain>ATCC 51907 / DSM 11121 / KW20 / Rd</strain>
    </source>
</reference>
<feature type="chain" id="PRO_0000091599" description="3-hydroxydecanoyl-[acyl-carrier-protein] dehydratase">
    <location>
        <begin position="1"/>
        <end position="177"/>
    </location>
</feature>
<feature type="active site" evidence="1">
    <location>
        <position position="76"/>
    </location>
</feature>
<sequence>MQNACTLNKKSSYSYDDLLASGRGELFGKEGPQLPAPTMLMMDRIIEMNEETGAFGKGYIEAELDIKPELPFFGCHFIGDPVMPGCLGLDAMWQLVGFYLGWIGGKGKGRALGVGEVKFTGQILPTAKKVVYRIHMKRVINRKLVMGMADGEVEVDGRVIYTATDLKVGLFQDTSTF</sequence>
<accession>P45159</accession>
<protein>
    <recommendedName>
        <fullName>3-hydroxydecanoyl-[acyl-carrier-protein] dehydratase</fullName>
        <ecNumber>4.2.1.59</ecNumber>
    </recommendedName>
    <alternativeName>
        <fullName>3-hydroxyacyl-[acyl-carrier-protein] dehydratase FabA</fullName>
    </alternativeName>
    <alternativeName>
        <fullName>Beta-hydroxydecanoyl thioester dehydrase</fullName>
    </alternativeName>
    <alternativeName>
        <fullName>Trans-2-decenoyl-[acyl-carrier-protein] isomerase</fullName>
        <ecNumber>5.3.3.14</ecNumber>
    </alternativeName>
</protein>
<keyword id="KW-0963">Cytoplasm</keyword>
<keyword id="KW-0275">Fatty acid biosynthesis</keyword>
<keyword id="KW-0276">Fatty acid metabolism</keyword>
<keyword id="KW-0413">Isomerase</keyword>
<keyword id="KW-0444">Lipid biosynthesis</keyword>
<keyword id="KW-0443">Lipid metabolism</keyword>
<keyword id="KW-0456">Lyase</keyword>
<keyword id="KW-1185">Reference proteome</keyword>
<comment type="function">
    <text evidence="1">Necessary for the introduction of cis unsaturation into fatty acids. Catalyzes the dehydration of (3R)-3-hydroxydecanoyl-ACP to E-(2)-decenoyl-ACP and then its isomerization to Z-(3)-decenoyl-ACP. Can catalyze the dehydratase reaction for beta-hydroxyacyl-ACPs with saturated chain lengths up to 16:0, being most active on intermediate chain length (By similarity).</text>
</comment>
<comment type="catalytic activity">
    <reaction>
        <text>a (3R)-hydroxyacyl-[ACP] = a (2E)-enoyl-[ACP] + H2O</text>
        <dbReference type="Rhea" id="RHEA:13097"/>
        <dbReference type="Rhea" id="RHEA-COMP:9925"/>
        <dbReference type="Rhea" id="RHEA-COMP:9945"/>
        <dbReference type="ChEBI" id="CHEBI:15377"/>
        <dbReference type="ChEBI" id="CHEBI:78784"/>
        <dbReference type="ChEBI" id="CHEBI:78827"/>
        <dbReference type="EC" id="4.2.1.59"/>
    </reaction>
</comment>
<comment type="catalytic activity">
    <reaction>
        <text>(3R)-hydroxydecanoyl-[ACP] = (2E)-decenoyl-[ACP] + H2O</text>
        <dbReference type="Rhea" id="RHEA:41860"/>
        <dbReference type="Rhea" id="RHEA-COMP:9638"/>
        <dbReference type="Rhea" id="RHEA-COMP:9639"/>
        <dbReference type="ChEBI" id="CHEBI:15377"/>
        <dbReference type="ChEBI" id="CHEBI:78466"/>
        <dbReference type="ChEBI" id="CHEBI:78467"/>
    </reaction>
</comment>
<comment type="catalytic activity">
    <reaction>
        <text>(2E)-decenoyl-[ACP] = (3Z)-decenoyl-[ACP]</text>
        <dbReference type="Rhea" id="RHEA:23568"/>
        <dbReference type="Rhea" id="RHEA-COMP:9639"/>
        <dbReference type="Rhea" id="RHEA-COMP:9927"/>
        <dbReference type="ChEBI" id="CHEBI:78467"/>
        <dbReference type="ChEBI" id="CHEBI:78798"/>
        <dbReference type="EC" id="5.3.3.14"/>
    </reaction>
</comment>
<comment type="pathway">
    <text>Lipid metabolism; fatty acid biosynthesis.</text>
</comment>
<comment type="subunit">
    <text evidence="1">Homodimer.</text>
</comment>
<comment type="subcellular location">
    <subcellularLocation>
        <location evidence="1">Cytoplasm</location>
    </subcellularLocation>
</comment>
<comment type="similarity">
    <text evidence="2">Belongs to the thioester dehydratase family. FabA subfamily.</text>
</comment>
<name>FABA_HAEIN</name>
<gene>
    <name type="primary">fabA</name>
    <name type="ordered locus">HI_1325</name>
</gene>
<organism>
    <name type="scientific">Haemophilus influenzae (strain ATCC 51907 / DSM 11121 / KW20 / Rd)</name>
    <dbReference type="NCBI Taxonomy" id="71421"/>
    <lineage>
        <taxon>Bacteria</taxon>
        <taxon>Pseudomonadati</taxon>
        <taxon>Pseudomonadota</taxon>
        <taxon>Gammaproteobacteria</taxon>
        <taxon>Pasteurellales</taxon>
        <taxon>Pasteurellaceae</taxon>
        <taxon>Haemophilus</taxon>
    </lineage>
</organism>
<dbReference type="EC" id="4.2.1.59"/>
<dbReference type="EC" id="5.3.3.14"/>
<dbReference type="EMBL" id="L42023">
    <property type="protein sequence ID" value="AAC22972.1"/>
    <property type="molecule type" value="Genomic_DNA"/>
</dbReference>
<dbReference type="PIR" id="G64116">
    <property type="entry name" value="G64116"/>
</dbReference>
<dbReference type="RefSeq" id="NP_439476.1">
    <property type="nucleotide sequence ID" value="NC_000907.1"/>
</dbReference>
<dbReference type="SMR" id="P45159"/>
<dbReference type="STRING" id="71421.HI_1325"/>
<dbReference type="EnsemblBacteria" id="AAC22972">
    <property type="protein sequence ID" value="AAC22972"/>
    <property type="gene ID" value="HI_1325"/>
</dbReference>
<dbReference type="KEGG" id="hin:HI_1325"/>
<dbReference type="PATRIC" id="fig|71421.8.peg.1377"/>
<dbReference type="eggNOG" id="COG0764">
    <property type="taxonomic scope" value="Bacteria"/>
</dbReference>
<dbReference type="HOGENOM" id="CLU_097925_0_0_6"/>
<dbReference type="OrthoDB" id="9786735at2"/>
<dbReference type="PhylomeDB" id="P45159"/>
<dbReference type="BioCyc" id="HINF71421:G1GJ1-1350-MONOMER"/>
<dbReference type="UniPathway" id="UPA00094"/>
<dbReference type="Proteomes" id="UP000000579">
    <property type="component" value="Chromosome"/>
</dbReference>
<dbReference type="GO" id="GO:0005737">
    <property type="term" value="C:cytoplasm"/>
    <property type="evidence" value="ECO:0007669"/>
    <property type="project" value="UniProtKB-SubCell"/>
</dbReference>
<dbReference type="GO" id="GO:0019171">
    <property type="term" value="F:(3R)-hydroxyacyl-[acyl-carrier-protein] dehydratase activity"/>
    <property type="evidence" value="ECO:0007669"/>
    <property type="project" value="UniProtKB-UniRule"/>
</dbReference>
<dbReference type="GO" id="GO:0034017">
    <property type="term" value="F:trans-2-decenoyl-acyl-carrier-protein isomerase activity"/>
    <property type="evidence" value="ECO:0007669"/>
    <property type="project" value="UniProtKB-UniRule"/>
</dbReference>
<dbReference type="GO" id="GO:0006636">
    <property type="term" value="P:unsaturated fatty acid biosynthetic process"/>
    <property type="evidence" value="ECO:0007669"/>
    <property type="project" value="UniProtKB-UniRule"/>
</dbReference>
<dbReference type="CDD" id="cd01287">
    <property type="entry name" value="FabA"/>
    <property type="match status" value="1"/>
</dbReference>
<dbReference type="FunFam" id="3.10.129.10:FF:000003">
    <property type="entry name" value="3-hydroxydecanoyl-[acyl-carrier-protein] dehydratase"/>
    <property type="match status" value="1"/>
</dbReference>
<dbReference type="Gene3D" id="3.10.129.10">
    <property type="entry name" value="Hotdog Thioesterase"/>
    <property type="match status" value="1"/>
</dbReference>
<dbReference type="HAMAP" id="MF_00405">
    <property type="entry name" value="FabA"/>
    <property type="match status" value="1"/>
</dbReference>
<dbReference type="InterPro" id="IPR010083">
    <property type="entry name" value="FabA"/>
</dbReference>
<dbReference type="InterPro" id="IPR013114">
    <property type="entry name" value="FabA_FabZ"/>
</dbReference>
<dbReference type="InterPro" id="IPR029069">
    <property type="entry name" value="HotDog_dom_sf"/>
</dbReference>
<dbReference type="NCBIfam" id="TIGR01749">
    <property type="entry name" value="fabA"/>
    <property type="match status" value="1"/>
</dbReference>
<dbReference type="NCBIfam" id="NF003509">
    <property type="entry name" value="PRK05174.1"/>
    <property type="match status" value="1"/>
</dbReference>
<dbReference type="PANTHER" id="PTHR30272">
    <property type="entry name" value="3-HYDROXYACYL-[ACYL-CARRIER-PROTEIN] DEHYDRATASE"/>
    <property type="match status" value="1"/>
</dbReference>
<dbReference type="PANTHER" id="PTHR30272:SF8">
    <property type="entry name" value="3-HYDROXYDECANOYL-[ACYL-CARRIER-PROTEIN] DEHYDRATASE"/>
    <property type="match status" value="1"/>
</dbReference>
<dbReference type="Pfam" id="PF07977">
    <property type="entry name" value="FabA"/>
    <property type="match status" value="1"/>
</dbReference>
<dbReference type="SUPFAM" id="SSF54637">
    <property type="entry name" value="Thioesterase/thiol ester dehydrase-isomerase"/>
    <property type="match status" value="1"/>
</dbReference>